<name>BDGF_ASPNC</name>
<accession>A2QVZ0</accession>
<sequence length="340" mass="37999">MKHHNYYPSTCLSILPFLLPLTMSHPQQNLLATTTSNTKAGNPVFPGWYADPEARLFNAQYWIYPTYSADYSEQTFFDAFSSPDLLTWTKHPTILNITNIPWSTNRAAWAPSVGRRLRSSANAEEEYDYFLYFSVGDGTGIGVAKSTTGKPEGPYEDVLGEPLVNGTVYGAEAIDAQIFQDDDGRNWLYFGGWSHAVVVELGEDMISLKGDYLEITPEGYVEGPWMLKRNGIYYYMFSVGGWGDNSYGVSYVTADSPTGPFSSTPKKILQGNDAVGTSTGHNSVFTPDGQDYYIVYHRRYVNDTARDHRVTCIDRMYFNEAGEILPVNITLEGVEGRTLS</sequence>
<reference key="1">
    <citation type="journal article" date="2007" name="Nat. Biotechnol.">
        <title>Genome sequencing and analysis of the versatile cell factory Aspergillus niger CBS 513.88.</title>
        <authorList>
            <person name="Pel H.J."/>
            <person name="de Winde J.H."/>
            <person name="Archer D.B."/>
            <person name="Dyer P.S."/>
            <person name="Hofmann G."/>
            <person name="Schaap P.J."/>
            <person name="Turner G."/>
            <person name="de Vries R.P."/>
            <person name="Albang R."/>
            <person name="Albermann K."/>
            <person name="Andersen M.R."/>
            <person name="Bendtsen J.D."/>
            <person name="Benen J.A.E."/>
            <person name="van den Berg M."/>
            <person name="Breestraat S."/>
            <person name="Caddick M.X."/>
            <person name="Contreras R."/>
            <person name="Cornell M."/>
            <person name="Coutinho P.M."/>
            <person name="Danchin E.G.J."/>
            <person name="Debets A.J.M."/>
            <person name="Dekker P."/>
            <person name="van Dijck P.W.M."/>
            <person name="van Dijk A."/>
            <person name="Dijkhuizen L."/>
            <person name="Driessen A.J.M."/>
            <person name="d'Enfert C."/>
            <person name="Geysens S."/>
            <person name="Goosen C."/>
            <person name="Groot G.S.P."/>
            <person name="de Groot P.W.J."/>
            <person name="Guillemette T."/>
            <person name="Henrissat B."/>
            <person name="Herweijer M."/>
            <person name="van den Hombergh J.P.T.W."/>
            <person name="van den Hondel C.A.M.J.J."/>
            <person name="van der Heijden R.T.J.M."/>
            <person name="van der Kaaij R.M."/>
            <person name="Klis F.M."/>
            <person name="Kools H.J."/>
            <person name="Kubicek C.P."/>
            <person name="van Kuyk P.A."/>
            <person name="Lauber J."/>
            <person name="Lu X."/>
            <person name="van der Maarel M.J.E.C."/>
            <person name="Meulenberg R."/>
            <person name="Menke H."/>
            <person name="Mortimer M.A."/>
            <person name="Nielsen J."/>
            <person name="Oliver S.G."/>
            <person name="Olsthoorn M."/>
            <person name="Pal K."/>
            <person name="van Peij N.N.M.E."/>
            <person name="Ram A.F.J."/>
            <person name="Rinas U."/>
            <person name="Roubos J.A."/>
            <person name="Sagt C.M.J."/>
            <person name="Schmoll M."/>
            <person name="Sun J."/>
            <person name="Ussery D."/>
            <person name="Varga J."/>
            <person name="Vervecken W."/>
            <person name="van de Vondervoort P.J.J."/>
            <person name="Wedler H."/>
            <person name="Woesten H.A.B."/>
            <person name="Zeng A.-P."/>
            <person name="van Ooyen A.J.J."/>
            <person name="Visser J."/>
            <person name="Stam H."/>
        </authorList>
    </citation>
    <scope>NUCLEOTIDE SEQUENCE [LARGE SCALE GENOMIC DNA]</scope>
    <source>
        <strain>ATCC MYA-4892 / CBS 513.88 / FGSC A1513</strain>
    </source>
</reference>
<reference key="2">
    <citation type="journal article" date="2020" name="Int. J. Mol. Sci.">
        <title>Galactofuranose-related enzymes: challenges and hopes.</title>
        <authorList>
            <person name="Senicar M."/>
            <person name="Lafite P."/>
            <person name="Eliseeva S.V."/>
            <person name="Petoud S."/>
            <person name="Landemarre L."/>
            <person name="Daniellou R."/>
        </authorList>
    </citation>
    <scope>BIOTECHNOLOGY</scope>
</reference>
<reference key="3">
    <citation type="journal article" date="2023" name="Enzyme Microb. Technol.">
        <title>Biochemical characterization of a glycoside hydrolase family 43 beta-D-galactofuranosidase from the fungus Aspergillus niger.</title>
        <authorList>
            <person name="Bulmer G.S."/>
            <person name="Yuen F.W."/>
            <person name="Begum N."/>
            <person name="Jones B.S."/>
            <person name="Flitsch S.L."/>
            <person name="van Munster J.M."/>
        </authorList>
    </citation>
    <scope>FUNCTION</scope>
    <scope>CATALYTIC ACTIVITY</scope>
    <scope>BIOPHYSICOCHEMICAL PROPERTIES</scope>
    <scope>SUBCELLULAR LOCATION</scope>
    <scope>PATHWAY</scope>
</reference>
<keyword id="KW-0119">Carbohydrate metabolism</keyword>
<keyword id="KW-0325">Glycoprotein</keyword>
<keyword id="KW-0326">Glycosidase</keyword>
<keyword id="KW-0378">Hydrolase</keyword>
<keyword id="KW-1185">Reference proteome</keyword>
<keyword id="KW-0964">Secreted</keyword>
<keyword id="KW-0732">Signal</keyword>
<proteinExistence type="evidence at protein level"/>
<protein>
    <recommendedName>
        <fullName evidence="5">Beta-D-galactofuranosidase xynD</fullName>
        <shortName evidence="5">Galfase xynD</shortName>
        <ecNumber evidence="4">3.2.1.-</ecNumber>
    </recommendedName>
</protein>
<gene>
    <name evidence="5" type="primary">xynD</name>
    <name type="ORF">An11g03120</name>
</gene>
<evidence type="ECO:0000250" key="1">
    <source>
        <dbReference type="UniProtKB" id="Q45071"/>
    </source>
</evidence>
<evidence type="ECO:0000255" key="2"/>
<evidence type="ECO:0000255" key="3">
    <source>
        <dbReference type="PROSITE-ProRule" id="PRU00498"/>
    </source>
</evidence>
<evidence type="ECO:0000269" key="4">
    <source>
    </source>
</evidence>
<evidence type="ECO:0000303" key="5">
    <source>
    </source>
</evidence>
<evidence type="ECO:0000305" key="6"/>
<evidence type="ECO:0000305" key="7">
    <source>
    </source>
</evidence>
<dbReference type="EC" id="3.2.1.-" evidence="4"/>
<dbReference type="EMBL" id="AM270229">
    <property type="protein sequence ID" value="CAK40644.1"/>
    <property type="status" value="ALT_INIT"/>
    <property type="molecule type" value="Genomic_DNA"/>
</dbReference>
<dbReference type="RefSeq" id="XP_001394314.1">
    <property type="nucleotide sequence ID" value="XM_001394277.1"/>
</dbReference>
<dbReference type="SMR" id="A2QVZ0"/>
<dbReference type="CAZy" id="GH43">
    <property type="family name" value="Glycoside Hydrolase Family 43"/>
</dbReference>
<dbReference type="EnsemblFungi" id="CAK40644">
    <property type="protein sequence ID" value="CAK40644"/>
    <property type="gene ID" value="An11g03120"/>
</dbReference>
<dbReference type="GeneID" id="4984543"/>
<dbReference type="KEGG" id="ang:An11g03120"/>
<dbReference type="HOGENOM" id="CLU_009397_4_2_1"/>
<dbReference type="Proteomes" id="UP000006706">
    <property type="component" value="Chromosome 7R"/>
</dbReference>
<dbReference type="GO" id="GO:0005576">
    <property type="term" value="C:extracellular region"/>
    <property type="evidence" value="ECO:0007669"/>
    <property type="project" value="UniProtKB-SubCell"/>
</dbReference>
<dbReference type="GO" id="GO:0031176">
    <property type="term" value="F:endo-1,4-beta-xylanase activity"/>
    <property type="evidence" value="ECO:0007669"/>
    <property type="project" value="UniProtKB-EC"/>
</dbReference>
<dbReference type="GO" id="GO:0005975">
    <property type="term" value="P:carbohydrate metabolic process"/>
    <property type="evidence" value="ECO:0007669"/>
    <property type="project" value="InterPro"/>
</dbReference>
<dbReference type="CDD" id="cd18827">
    <property type="entry name" value="GH43_XlnD-like"/>
    <property type="match status" value="1"/>
</dbReference>
<dbReference type="Gene3D" id="2.115.10.20">
    <property type="entry name" value="Glycosyl hydrolase domain, family 43"/>
    <property type="match status" value="1"/>
</dbReference>
<dbReference type="InterPro" id="IPR006710">
    <property type="entry name" value="Glyco_hydro_43"/>
</dbReference>
<dbReference type="InterPro" id="IPR023296">
    <property type="entry name" value="Glyco_hydro_beta-prop_sf"/>
</dbReference>
<dbReference type="InterPro" id="IPR052176">
    <property type="entry name" value="Glycosyl_Hydrlase_43_Enz"/>
</dbReference>
<dbReference type="PANTHER" id="PTHR43772">
    <property type="entry name" value="ENDO-1,4-BETA-XYLANASE"/>
    <property type="match status" value="1"/>
</dbReference>
<dbReference type="PANTHER" id="PTHR43772:SF2">
    <property type="entry name" value="PUTATIVE (AFU_ORTHOLOGUE AFUA_2G04480)-RELATED"/>
    <property type="match status" value="1"/>
</dbReference>
<dbReference type="Pfam" id="PF04616">
    <property type="entry name" value="Glyco_hydro_43"/>
    <property type="match status" value="1"/>
</dbReference>
<dbReference type="SUPFAM" id="SSF75005">
    <property type="entry name" value="Arabinanase/levansucrase/invertase"/>
    <property type="match status" value="1"/>
</dbReference>
<comment type="function">
    <text evidence="4">Glycoside hydrolase family 43 beta-D-galactofuranosidase involved in the degradation of beta-galactofuranoside (Galf)-containing glycans such as galactomannan or O-glycans (PubMed:36521309). Is not active on beta-1,5- or beta-1,6-linked beta-D-galactofuranose (Galf) residues (PubMed:36521309).</text>
</comment>
<comment type="biophysicochemical properties">
    <kinetics>
        <KM evidence="4">17.9 mM for 4-nitrophenyl-beta-galactofuranoside (pNP-beta-Galf)</KM>
        <Vmax evidence="4">70.6 umol/min/mg enzyme towards 4-nitrophenyl-beta-galactofuranoside (pNP-beta-Galf)</Vmax>
    </kinetics>
    <phDependence>
        <text evidence="4">Optimum pH is 5.0.</text>
    </phDependence>
    <temperatureDependence>
        <text evidence="4">Optimum temperature is 25 degrees Celsius.</text>
    </temperatureDependence>
</comment>
<comment type="pathway">
    <text evidence="4">Glycan degradation.</text>
</comment>
<comment type="subcellular location">
    <subcellularLocation>
        <location evidence="4">Secreted</location>
    </subcellularLocation>
</comment>
<comment type="biotechnology">
    <text evidence="7">Beta-D-galactofuranosidases are being responsible for the degradation of beta-galactofuranoside (Galf)-containing glycans which are important as drug targets and immunogenic motifs in the production of pharmaceuticals due to the absence of the Galf monosaccharide in mammalian tissues.</text>
</comment>
<comment type="similarity">
    <text evidence="6">Belongs to the glycosyl hydrolase 43 family.</text>
</comment>
<comment type="sequence caution" evidence="6">
    <conflict type="erroneous initiation">
        <sequence resource="EMBL-CDS" id="CAK40644"/>
    </conflict>
    <text>Truncated N-terminus.</text>
</comment>
<organism>
    <name type="scientific">Aspergillus niger (strain ATCC MYA-4892 / CBS 513.88 / FGSC A1513)</name>
    <dbReference type="NCBI Taxonomy" id="425011"/>
    <lineage>
        <taxon>Eukaryota</taxon>
        <taxon>Fungi</taxon>
        <taxon>Dikarya</taxon>
        <taxon>Ascomycota</taxon>
        <taxon>Pezizomycotina</taxon>
        <taxon>Eurotiomycetes</taxon>
        <taxon>Eurotiomycetidae</taxon>
        <taxon>Eurotiales</taxon>
        <taxon>Aspergillaceae</taxon>
        <taxon>Aspergillus</taxon>
        <taxon>Aspergillus subgen. Circumdati</taxon>
    </lineage>
</organism>
<feature type="signal peptide" evidence="2">
    <location>
        <begin position="1"/>
        <end position="24"/>
    </location>
</feature>
<feature type="chain" id="PRO_0000458992" description="Beta-D-galactofuranosidase xynD">
    <location>
        <begin position="25"/>
        <end position="340"/>
    </location>
</feature>
<feature type="active site" description="Proton acceptor" evidence="1">
    <location>
        <position position="51"/>
    </location>
</feature>
<feature type="active site" description="Proton donor" evidence="1">
    <location>
        <position position="222"/>
    </location>
</feature>
<feature type="site" description="Important for catalytic activity, responsible for pKa modulation of the active site Glu and correct orientation of both the proton donor and substrate" evidence="1">
    <location>
        <position position="175"/>
    </location>
</feature>
<feature type="glycosylation site" description="N-linked (GlcNAc...) asparagine" evidence="3">
    <location>
        <position position="96"/>
    </location>
</feature>
<feature type="glycosylation site" description="N-linked (GlcNAc...) asparagine" evidence="3">
    <location>
        <position position="165"/>
    </location>
</feature>
<feature type="glycosylation site" description="N-linked (GlcNAc...) asparagine" evidence="3">
    <location>
        <position position="302"/>
    </location>
</feature>
<feature type="glycosylation site" description="N-linked (GlcNAc...) asparagine" evidence="3">
    <location>
        <position position="328"/>
    </location>
</feature>